<dbReference type="EC" id="3.5.1.2" evidence="1"/>
<dbReference type="EMBL" id="CP001389">
    <property type="protein sequence ID" value="ACP25400.1"/>
    <property type="molecule type" value="Genomic_DNA"/>
</dbReference>
<dbReference type="RefSeq" id="WP_012708169.1">
    <property type="nucleotide sequence ID" value="NC_012587.1"/>
</dbReference>
<dbReference type="RefSeq" id="YP_002826153.1">
    <property type="nucleotide sequence ID" value="NC_012587.1"/>
</dbReference>
<dbReference type="SMR" id="C3MD81"/>
<dbReference type="STRING" id="394.NGR_c16350"/>
<dbReference type="KEGG" id="rhi:NGR_c16350"/>
<dbReference type="PATRIC" id="fig|394.7.peg.4451"/>
<dbReference type="eggNOG" id="COG2066">
    <property type="taxonomic scope" value="Bacteria"/>
</dbReference>
<dbReference type="HOGENOM" id="CLU_027932_1_1_5"/>
<dbReference type="OrthoDB" id="9788822at2"/>
<dbReference type="Proteomes" id="UP000001054">
    <property type="component" value="Chromosome"/>
</dbReference>
<dbReference type="GO" id="GO:0004359">
    <property type="term" value="F:glutaminase activity"/>
    <property type="evidence" value="ECO:0007669"/>
    <property type="project" value="UniProtKB-UniRule"/>
</dbReference>
<dbReference type="GO" id="GO:0006537">
    <property type="term" value="P:glutamate biosynthetic process"/>
    <property type="evidence" value="ECO:0007669"/>
    <property type="project" value="TreeGrafter"/>
</dbReference>
<dbReference type="GO" id="GO:0006543">
    <property type="term" value="P:glutamine catabolic process"/>
    <property type="evidence" value="ECO:0007669"/>
    <property type="project" value="TreeGrafter"/>
</dbReference>
<dbReference type="FunFam" id="3.40.710.10:FF:000005">
    <property type="entry name" value="Glutaminase"/>
    <property type="match status" value="1"/>
</dbReference>
<dbReference type="Gene3D" id="3.40.710.10">
    <property type="entry name" value="DD-peptidase/beta-lactamase superfamily"/>
    <property type="match status" value="1"/>
</dbReference>
<dbReference type="HAMAP" id="MF_00313">
    <property type="entry name" value="Glutaminase"/>
    <property type="match status" value="1"/>
</dbReference>
<dbReference type="InterPro" id="IPR012338">
    <property type="entry name" value="Beta-lactam/transpept-like"/>
</dbReference>
<dbReference type="InterPro" id="IPR015868">
    <property type="entry name" value="Glutaminase"/>
</dbReference>
<dbReference type="NCBIfam" id="TIGR03814">
    <property type="entry name" value="Gln_ase"/>
    <property type="match status" value="1"/>
</dbReference>
<dbReference type="NCBIfam" id="NF002132">
    <property type="entry name" value="PRK00971.1-1"/>
    <property type="match status" value="1"/>
</dbReference>
<dbReference type="NCBIfam" id="NF002133">
    <property type="entry name" value="PRK00971.1-2"/>
    <property type="match status" value="1"/>
</dbReference>
<dbReference type="PANTHER" id="PTHR12544">
    <property type="entry name" value="GLUTAMINASE"/>
    <property type="match status" value="1"/>
</dbReference>
<dbReference type="PANTHER" id="PTHR12544:SF29">
    <property type="entry name" value="GLUTAMINASE"/>
    <property type="match status" value="1"/>
</dbReference>
<dbReference type="Pfam" id="PF04960">
    <property type="entry name" value="Glutaminase"/>
    <property type="match status" value="1"/>
</dbReference>
<dbReference type="SUPFAM" id="SSF56601">
    <property type="entry name" value="beta-lactamase/transpeptidase-like"/>
    <property type="match status" value="1"/>
</dbReference>
<protein>
    <recommendedName>
        <fullName evidence="1">Glutaminase</fullName>
        <ecNumber evidence="1">3.5.1.2</ecNumber>
    </recommendedName>
</protein>
<keyword id="KW-0378">Hydrolase</keyword>
<keyword id="KW-1185">Reference proteome</keyword>
<organism>
    <name type="scientific">Sinorhizobium fredii (strain NBRC 101917 / NGR234)</name>
    <dbReference type="NCBI Taxonomy" id="394"/>
    <lineage>
        <taxon>Bacteria</taxon>
        <taxon>Pseudomonadati</taxon>
        <taxon>Pseudomonadota</taxon>
        <taxon>Alphaproteobacteria</taxon>
        <taxon>Hyphomicrobiales</taxon>
        <taxon>Rhizobiaceae</taxon>
        <taxon>Sinorhizobium/Ensifer group</taxon>
        <taxon>Sinorhizobium</taxon>
    </lineage>
</organism>
<name>GLSA_SINFN</name>
<accession>C3MD81</accession>
<gene>
    <name evidence="1" type="primary">glsA</name>
    <name type="ordered locus">NGR_c16350</name>
</gene>
<sequence>MPEQKAPQDLQLILDDIYRELTPRLGEGKVADYIPQLARVNPQHFGMAIVTTGGEVHRVGDAEVPFSIQSISKVFTLTLALGKHGENIWHRVGREPSGSAFNSIVQLEHEGGKPRNPFINAGAITISDLILAGHTPKELIGEIVRFVRYLADDENIVIDHEVARSETVTGFRNFALASFMRSFGRLDHPVEHVLGVYFHHCALAMTCSQLAKAGLFLAAGGTNPLTGHSVVSRQRARRINALMLTCGHYDGSGDFAYRVGLPGKSGVGGGIMAVAPGKASIAVWSPGLNENGNSLLGSLALEMLAARTGWSVFGP</sequence>
<feature type="chain" id="PRO_1000132910" description="Glutaminase">
    <location>
        <begin position="1"/>
        <end position="315"/>
    </location>
</feature>
<feature type="binding site" evidence="1">
    <location>
        <position position="70"/>
    </location>
    <ligand>
        <name>substrate</name>
    </ligand>
</feature>
<feature type="binding site" evidence="1">
    <location>
        <position position="120"/>
    </location>
    <ligand>
        <name>substrate</name>
    </ligand>
</feature>
<feature type="binding site" evidence="1">
    <location>
        <position position="166"/>
    </location>
    <ligand>
        <name>substrate</name>
    </ligand>
</feature>
<feature type="binding site" evidence="1">
    <location>
        <position position="173"/>
    </location>
    <ligand>
        <name>substrate</name>
    </ligand>
</feature>
<feature type="binding site" evidence="1">
    <location>
        <position position="197"/>
    </location>
    <ligand>
        <name>substrate</name>
    </ligand>
</feature>
<feature type="binding site" evidence="1">
    <location>
        <position position="249"/>
    </location>
    <ligand>
        <name>substrate</name>
    </ligand>
</feature>
<feature type="binding site" evidence="1">
    <location>
        <position position="267"/>
    </location>
    <ligand>
        <name>substrate</name>
    </ligand>
</feature>
<comment type="catalytic activity">
    <reaction evidence="1">
        <text>L-glutamine + H2O = L-glutamate + NH4(+)</text>
        <dbReference type="Rhea" id="RHEA:15889"/>
        <dbReference type="ChEBI" id="CHEBI:15377"/>
        <dbReference type="ChEBI" id="CHEBI:28938"/>
        <dbReference type="ChEBI" id="CHEBI:29985"/>
        <dbReference type="ChEBI" id="CHEBI:58359"/>
        <dbReference type="EC" id="3.5.1.2"/>
    </reaction>
</comment>
<comment type="subunit">
    <text evidence="1">Homotetramer.</text>
</comment>
<comment type="similarity">
    <text evidence="1">Belongs to the glutaminase family.</text>
</comment>
<evidence type="ECO:0000255" key="1">
    <source>
        <dbReference type="HAMAP-Rule" id="MF_00313"/>
    </source>
</evidence>
<reference key="1">
    <citation type="journal article" date="2009" name="Appl. Environ. Microbiol.">
        <title>Rhizobium sp. strain NGR234 possesses a remarkable number of secretion systems.</title>
        <authorList>
            <person name="Schmeisser C."/>
            <person name="Liesegang H."/>
            <person name="Krysciak D."/>
            <person name="Bakkou N."/>
            <person name="Le Quere A."/>
            <person name="Wollherr A."/>
            <person name="Heinemeyer I."/>
            <person name="Morgenstern B."/>
            <person name="Pommerening-Roeser A."/>
            <person name="Flores M."/>
            <person name="Palacios R."/>
            <person name="Brenner S."/>
            <person name="Gottschalk G."/>
            <person name="Schmitz R.A."/>
            <person name="Broughton W.J."/>
            <person name="Perret X."/>
            <person name="Strittmatter A.W."/>
            <person name="Streit W.R."/>
        </authorList>
    </citation>
    <scope>NUCLEOTIDE SEQUENCE [LARGE SCALE GENOMIC DNA]</scope>
    <source>
        <strain>NBRC 101917 / NGR234</strain>
    </source>
</reference>
<proteinExistence type="inferred from homology"/>